<sequence>MSRVGKKPIEIPAGVTVTVNGNTVTVKGPKGELTRTFHPDMTITVEGNVITVTRPSDEKHHRALHGTTRSLLANMVEGVSKGYEKALELVGVGYRASKQGKKLVLSVGYSHPVEIEPEEGLEIEVPSQTKIIVKGADKQRVGELAANIRAVRPPEPYKGKGIRYEGELVRLKEGKTGK</sequence>
<keyword id="KW-0002">3D-structure</keyword>
<keyword id="KW-1185">Reference proteome</keyword>
<keyword id="KW-0687">Ribonucleoprotein</keyword>
<keyword id="KW-0689">Ribosomal protein</keyword>
<keyword id="KW-0694">RNA-binding</keyword>
<keyword id="KW-0699">rRNA-binding</keyword>
<feature type="chain" id="PRO_0000260872" description="Large ribosomal subunit protein uL6">
    <location>
        <begin position="1"/>
        <end position="178"/>
    </location>
</feature>
<comment type="function">
    <text evidence="1">This protein binds to the 23S rRNA, and is important in its secondary structure. It is located near the subunit interface in the base of the L7/L12 stalk, and near the tRNA binding site of the peptidyltransferase center.</text>
</comment>
<comment type="subunit">
    <text evidence="1">Part of the 50S ribosomal subunit.</text>
</comment>
<comment type="similarity">
    <text evidence="1">Belongs to the universal ribosomal protein uL6 family.</text>
</comment>
<gene>
    <name evidence="1" type="primary">rplF</name>
    <name type="ordered locus">GK0121</name>
</gene>
<name>RL6_GEOKA</name>
<reference key="1">
    <citation type="journal article" date="2004" name="Nucleic Acids Res.">
        <title>Thermoadaptation trait revealed by the genome sequence of thermophilic Geobacillus kaustophilus.</title>
        <authorList>
            <person name="Takami H."/>
            <person name="Takaki Y."/>
            <person name="Chee G.-J."/>
            <person name="Nishi S."/>
            <person name="Shimamura S."/>
            <person name="Suzuki H."/>
            <person name="Matsui S."/>
            <person name="Uchiyama I."/>
        </authorList>
    </citation>
    <scope>NUCLEOTIDE SEQUENCE [LARGE SCALE GENOMIC DNA]</scope>
    <source>
        <strain>HTA426</strain>
    </source>
</reference>
<organism>
    <name type="scientific">Geobacillus kaustophilus (strain HTA426)</name>
    <dbReference type="NCBI Taxonomy" id="235909"/>
    <lineage>
        <taxon>Bacteria</taxon>
        <taxon>Bacillati</taxon>
        <taxon>Bacillota</taxon>
        <taxon>Bacilli</taxon>
        <taxon>Bacillales</taxon>
        <taxon>Anoxybacillaceae</taxon>
        <taxon>Geobacillus</taxon>
        <taxon>Geobacillus thermoleovorans group</taxon>
    </lineage>
</organism>
<evidence type="ECO:0000255" key="1">
    <source>
        <dbReference type="HAMAP-Rule" id="MF_01365"/>
    </source>
</evidence>
<evidence type="ECO:0000305" key="2"/>
<protein>
    <recommendedName>
        <fullName evidence="1">Large ribosomal subunit protein uL6</fullName>
    </recommendedName>
    <alternativeName>
        <fullName evidence="2">50S ribosomal protein L6</fullName>
    </alternativeName>
</protein>
<accession>Q5L408</accession>
<dbReference type="EMBL" id="BA000043">
    <property type="protein sequence ID" value="BAD74406.1"/>
    <property type="molecule type" value="Genomic_DNA"/>
</dbReference>
<dbReference type="RefSeq" id="WP_011229634.1">
    <property type="nucleotide sequence ID" value="NC_006510.1"/>
</dbReference>
<dbReference type="PDB" id="4V4R">
    <property type="method" value="X-ray"/>
    <property type="resolution" value="5.90 A"/>
    <property type="chains" value="BH=2-178"/>
</dbReference>
<dbReference type="PDB" id="4V4S">
    <property type="method" value="X-ray"/>
    <property type="resolution" value="6.76 A"/>
    <property type="chains" value="BH=2-178"/>
</dbReference>
<dbReference type="PDB" id="4V4T">
    <property type="method" value="X-ray"/>
    <property type="resolution" value="6.46 A"/>
    <property type="chains" value="BH=2-178"/>
</dbReference>
<dbReference type="PDBsum" id="4V4R"/>
<dbReference type="PDBsum" id="4V4S"/>
<dbReference type="PDBsum" id="4V4T"/>
<dbReference type="SMR" id="Q5L408"/>
<dbReference type="STRING" id="235909.GK0121"/>
<dbReference type="GeneID" id="89612885"/>
<dbReference type="KEGG" id="gka:GK0121"/>
<dbReference type="eggNOG" id="COG0097">
    <property type="taxonomic scope" value="Bacteria"/>
</dbReference>
<dbReference type="HOGENOM" id="CLU_065464_1_2_9"/>
<dbReference type="EvolutionaryTrace" id="Q5L408"/>
<dbReference type="Proteomes" id="UP000001172">
    <property type="component" value="Chromosome"/>
</dbReference>
<dbReference type="GO" id="GO:0022625">
    <property type="term" value="C:cytosolic large ribosomal subunit"/>
    <property type="evidence" value="ECO:0007669"/>
    <property type="project" value="TreeGrafter"/>
</dbReference>
<dbReference type="GO" id="GO:0019843">
    <property type="term" value="F:rRNA binding"/>
    <property type="evidence" value="ECO:0007669"/>
    <property type="project" value="UniProtKB-UniRule"/>
</dbReference>
<dbReference type="GO" id="GO:0003735">
    <property type="term" value="F:structural constituent of ribosome"/>
    <property type="evidence" value="ECO:0007669"/>
    <property type="project" value="InterPro"/>
</dbReference>
<dbReference type="GO" id="GO:0002181">
    <property type="term" value="P:cytoplasmic translation"/>
    <property type="evidence" value="ECO:0007669"/>
    <property type="project" value="TreeGrafter"/>
</dbReference>
<dbReference type="FunFam" id="3.90.930.12:FF:000001">
    <property type="entry name" value="50S ribosomal protein L6"/>
    <property type="match status" value="1"/>
</dbReference>
<dbReference type="FunFam" id="3.90.930.12:FF:000002">
    <property type="entry name" value="50S ribosomal protein L6"/>
    <property type="match status" value="1"/>
</dbReference>
<dbReference type="Gene3D" id="3.90.930.12">
    <property type="entry name" value="Ribosomal protein L6, alpha-beta domain"/>
    <property type="match status" value="2"/>
</dbReference>
<dbReference type="HAMAP" id="MF_01365_B">
    <property type="entry name" value="Ribosomal_uL6_B"/>
    <property type="match status" value="1"/>
</dbReference>
<dbReference type="InterPro" id="IPR000702">
    <property type="entry name" value="Ribosomal_uL6-like"/>
</dbReference>
<dbReference type="InterPro" id="IPR036789">
    <property type="entry name" value="Ribosomal_uL6-like_a/b-dom_sf"/>
</dbReference>
<dbReference type="InterPro" id="IPR020040">
    <property type="entry name" value="Ribosomal_uL6_a/b-dom"/>
</dbReference>
<dbReference type="InterPro" id="IPR019906">
    <property type="entry name" value="Ribosomal_uL6_bac-type"/>
</dbReference>
<dbReference type="InterPro" id="IPR002358">
    <property type="entry name" value="Ribosomal_uL6_CS"/>
</dbReference>
<dbReference type="NCBIfam" id="TIGR03654">
    <property type="entry name" value="L6_bact"/>
    <property type="match status" value="1"/>
</dbReference>
<dbReference type="PANTHER" id="PTHR11655">
    <property type="entry name" value="60S/50S RIBOSOMAL PROTEIN L6/L9"/>
    <property type="match status" value="1"/>
</dbReference>
<dbReference type="PANTHER" id="PTHR11655:SF14">
    <property type="entry name" value="LARGE RIBOSOMAL SUBUNIT PROTEIN UL6M"/>
    <property type="match status" value="1"/>
</dbReference>
<dbReference type="Pfam" id="PF00347">
    <property type="entry name" value="Ribosomal_L6"/>
    <property type="match status" value="2"/>
</dbReference>
<dbReference type="PIRSF" id="PIRSF002162">
    <property type="entry name" value="Ribosomal_L6"/>
    <property type="match status" value="1"/>
</dbReference>
<dbReference type="PRINTS" id="PR00059">
    <property type="entry name" value="RIBOSOMALL6"/>
</dbReference>
<dbReference type="SUPFAM" id="SSF56053">
    <property type="entry name" value="Ribosomal protein L6"/>
    <property type="match status" value="2"/>
</dbReference>
<dbReference type="PROSITE" id="PS00525">
    <property type="entry name" value="RIBOSOMAL_L6_1"/>
    <property type="match status" value="1"/>
</dbReference>
<proteinExistence type="evidence at protein level"/>